<keyword id="KW-0067">ATP-binding</keyword>
<keyword id="KW-0963">Cytoplasm</keyword>
<keyword id="KW-0547">Nucleotide-binding</keyword>
<keyword id="KW-0694">RNA-binding</keyword>
<keyword id="KW-0784">Thiamine biosynthesis</keyword>
<keyword id="KW-0808">Transferase</keyword>
<keyword id="KW-0820">tRNA-binding</keyword>
<accession>A6U2I2</accession>
<name>THII_STAA2</name>
<organism>
    <name type="scientific">Staphylococcus aureus (strain JH1)</name>
    <dbReference type="NCBI Taxonomy" id="359787"/>
    <lineage>
        <taxon>Bacteria</taxon>
        <taxon>Bacillati</taxon>
        <taxon>Bacillota</taxon>
        <taxon>Bacilli</taxon>
        <taxon>Bacillales</taxon>
        <taxon>Staphylococcaceae</taxon>
        <taxon>Staphylococcus</taxon>
    </lineage>
</organism>
<comment type="function">
    <text evidence="1">Catalyzes the ATP-dependent transfer of a sulfur to tRNA to produce 4-thiouridine in position 8 of tRNAs, which functions as a near-UV photosensor. Also catalyzes the transfer of sulfur to the sulfur carrier protein ThiS, forming ThiS-thiocarboxylate. This is a step in the synthesis of thiazole, in the thiamine biosynthesis pathway. The sulfur is donated as persulfide by IscS.</text>
</comment>
<comment type="catalytic activity">
    <reaction evidence="1">
        <text>[ThiI sulfur-carrier protein]-S-sulfanyl-L-cysteine + a uridine in tRNA + 2 reduced [2Fe-2S]-[ferredoxin] + ATP + H(+) = [ThiI sulfur-carrier protein]-L-cysteine + a 4-thiouridine in tRNA + 2 oxidized [2Fe-2S]-[ferredoxin] + AMP + diphosphate</text>
        <dbReference type="Rhea" id="RHEA:24176"/>
        <dbReference type="Rhea" id="RHEA-COMP:10000"/>
        <dbReference type="Rhea" id="RHEA-COMP:10001"/>
        <dbReference type="Rhea" id="RHEA-COMP:13337"/>
        <dbReference type="Rhea" id="RHEA-COMP:13338"/>
        <dbReference type="Rhea" id="RHEA-COMP:13339"/>
        <dbReference type="Rhea" id="RHEA-COMP:13340"/>
        <dbReference type="ChEBI" id="CHEBI:15378"/>
        <dbReference type="ChEBI" id="CHEBI:29950"/>
        <dbReference type="ChEBI" id="CHEBI:30616"/>
        <dbReference type="ChEBI" id="CHEBI:33019"/>
        <dbReference type="ChEBI" id="CHEBI:33737"/>
        <dbReference type="ChEBI" id="CHEBI:33738"/>
        <dbReference type="ChEBI" id="CHEBI:61963"/>
        <dbReference type="ChEBI" id="CHEBI:65315"/>
        <dbReference type="ChEBI" id="CHEBI:136798"/>
        <dbReference type="ChEBI" id="CHEBI:456215"/>
        <dbReference type="EC" id="2.8.1.4"/>
    </reaction>
</comment>
<comment type="catalytic activity">
    <reaction evidence="1">
        <text>[ThiS sulfur-carrier protein]-C-terminal Gly-Gly-AMP + S-sulfanyl-L-cysteinyl-[cysteine desulfurase] + AH2 = [ThiS sulfur-carrier protein]-C-terminal-Gly-aminoethanethioate + L-cysteinyl-[cysteine desulfurase] + A + AMP + 2 H(+)</text>
        <dbReference type="Rhea" id="RHEA:43340"/>
        <dbReference type="Rhea" id="RHEA-COMP:12157"/>
        <dbReference type="Rhea" id="RHEA-COMP:12158"/>
        <dbReference type="Rhea" id="RHEA-COMP:12910"/>
        <dbReference type="Rhea" id="RHEA-COMP:19908"/>
        <dbReference type="ChEBI" id="CHEBI:13193"/>
        <dbReference type="ChEBI" id="CHEBI:15378"/>
        <dbReference type="ChEBI" id="CHEBI:17499"/>
        <dbReference type="ChEBI" id="CHEBI:29950"/>
        <dbReference type="ChEBI" id="CHEBI:61963"/>
        <dbReference type="ChEBI" id="CHEBI:90618"/>
        <dbReference type="ChEBI" id="CHEBI:232372"/>
        <dbReference type="ChEBI" id="CHEBI:456215"/>
    </reaction>
</comment>
<comment type="pathway">
    <text evidence="1">Cofactor biosynthesis; thiamine diphosphate biosynthesis.</text>
</comment>
<comment type="subcellular location">
    <subcellularLocation>
        <location evidence="1">Cytoplasm</location>
    </subcellularLocation>
</comment>
<comment type="similarity">
    <text evidence="1">Belongs to the ThiI family.</text>
</comment>
<feature type="chain" id="PRO_1000074283" description="Probable tRNA sulfurtransferase">
    <location>
        <begin position="1"/>
        <end position="407"/>
    </location>
</feature>
<feature type="domain" description="THUMP" evidence="1">
    <location>
        <begin position="61"/>
        <end position="165"/>
    </location>
</feature>
<feature type="binding site" evidence="1">
    <location>
        <begin position="183"/>
        <end position="184"/>
    </location>
    <ligand>
        <name>ATP</name>
        <dbReference type="ChEBI" id="CHEBI:30616"/>
    </ligand>
</feature>
<feature type="binding site" evidence="1">
    <location>
        <begin position="208"/>
        <end position="209"/>
    </location>
    <ligand>
        <name>ATP</name>
        <dbReference type="ChEBI" id="CHEBI:30616"/>
    </ligand>
</feature>
<feature type="binding site" evidence="1">
    <location>
        <position position="265"/>
    </location>
    <ligand>
        <name>ATP</name>
        <dbReference type="ChEBI" id="CHEBI:30616"/>
    </ligand>
</feature>
<feature type="binding site" evidence="1">
    <location>
        <position position="287"/>
    </location>
    <ligand>
        <name>ATP</name>
        <dbReference type="ChEBI" id="CHEBI:30616"/>
    </ligand>
</feature>
<feature type="binding site" evidence="1">
    <location>
        <position position="296"/>
    </location>
    <ligand>
        <name>ATP</name>
        <dbReference type="ChEBI" id="CHEBI:30616"/>
    </ligand>
</feature>
<protein>
    <recommendedName>
        <fullName evidence="1">Probable tRNA sulfurtransferase</fullName>
        <ecNumber evidence="1">2.8.1.4</ecNumber>
    </recommendedName>
    <alternativeName>
        <fullName evidence="1">Sulfur carrier protein ThiS sulfurtransferase</fullName>
    </alternativeName>
    <alternativeName>
        <fullName evidence="1">Thiamine biosynthesis protein ThiI</fullName>
    </alternativeName>
    <alternativeName>
        <fullName evidence="1">tRNA 4-thiouridine synthase</fullName>
    </alternativeName>
</protein>
<reference key="1">
    <citation type="submission" date="2007-06" db="EMBL/GenBank/DDBJ databases">
        <title>Complete sequence of chromosome of Staphylococcus aureus subsp. aureus JH1.</title>
        <authorList>
            <consortium name="US DOE Joint Genome Institute"/>
            <person name="Copeland A."/>
            <person name="Lucas S."/>
            <person name="Lapidus A."/>
            <person name="Barry K."/>
            <person name="Detter J.C."/>
            <person name="Glavina del Rio T."/>
            <person name="Hammon N."/>
            <person name="Israni S."/>
            <person name="Dalin E."/>
            <person name="Tice H."/>
            <person name="Pitluck S."/>
            <person name="Chain P."/>
            <person name="Malfatti S."/>
            <person name="Shin M."/>
            <person name="Vergez L."/>
            <person name="Schmutz J."/>
            <person name="Larimer F."/>
            <person name="Land M."/>
            <person name="Hauser L."/>
            <person name="Kyrpides N."/>
            <person name="Ivanova N."/>
            <person name="Tomasz A."/>
            <person name="Richardson P."/>
        </authorList>
    </citation>
    <scope>NUCLEOTIDE SEQUENCE [LARGE SCALE GENOMIC DNA]</scope>
    <source>
        <strain>JH1</strain>
    </source>
</reference>
<sequence length="407" mass="46256">MKYDHLLVRYGELTLKGSNRKKFVNQLRNNVNKSLKGLDGFVVKGKRDRMYIELEDHADINEITYRLSKIFGIKSISPVLKVEKTIEAMSAAAIKFAQQFEENSTFKIDVKRADKNFPMDTYELQRELGGTVLKQIENVSVNVKRPDHEIRVEVRLDAIYMYEEVVPGSGGLPVGTGGKTLLMLSGGIDSPVAGMEVMRRGVTIEAIHFHSPPFTSDQAKEKVIELTRILAERVGPIKLHIVPFTELQKRVNKVVHPRYTMTSTRRMMMRVADKLVHQIGALAIVNGENLGQVASQTLHSMYAINNVTSTPVLRPLLTYDKEEIIIKSKEIGTFETSIQPFEDCCTIFTPKNPVTEPNFEKVVQYESVFDFEEMINRAVENIETLEITSDYKTIKEQQTNQLINDFL</sequence>
<dbReference type="EC" id="2.8.1.4" evidence="1"/>
<dbReference type="EMBL" id="CP000736">
    <property type="protein sequence ID" value="ABR52650.1"/>
    <property type="molecule type" value="Genomic_DNA"/>
</dbReference>
<dbReference type="SMR" id="A6U2I2"/>
<dbReference type="KEGG" id="sah:SaurJH1_1806"/>
<dbReference type="HOGENOM" id="CLU_037952_4_0_9"/>
<dbReference type="UniPathway" id="UPA00060"/>
<dbReference type="GO" id="GO:0005829">
    <property type="term" value="C:cytosol"/>
    <property type="evidence" value="ECO:0007669"/>
    <property type="project" value="TreeGrafter"/>
</dbReference>
<dbReference type="GO" id="GO:0005524">
    <property type="term" value="F:ATP binding"/>
    <property type="evidence" value="ECO:0007669"/>
    <property type="project" value="UniProtKB-UniRule"/>
</dbReference>
<dbReference type="GO" id="GO:0004810">
    <property type="term" value="F:CCA tRNA nucleotidyltransferase activity"/>
    <property type="evidence" value="ECO:0007669"/>
    <property type="project" value="InterPro"/>
</dbReference>
<dbReference type="GO" id="GO:0000049">
    <property type="term" value="F:tRNA binding"/>
    <property type="evidence" value="ECO:0007669"/>
    <property type="project" value="UniProtKB-UniRule"/>
</dbReference>
<dbReference type="GO" id="GO:0140741">
    <property type="term" value="F:tRNA-uracil-4 sulfurtransferase activity"/>
    <property type="evidence" value="ECO:0007669"/>
    <property type="project" value="UniProtKB-EC"/>
</dbReference>
<dbReference type="GO" id="GO:0009228">
    <property type="term" value="P:thiamine biosynthetic process"/>
    <property type="evidence" value="ECO:0007669"/>
    <property type="project" value="UniProtKB-KW"/>
</dbReference>
<dbReference type="GO" id="GO:0009229">
    <property type="term" value="P:thiamine diphosphate biosynthetic process"/>
    <property type="evidence" value="ECO:0007669"/>
    <property type="project" value="UniProtKB-UniRule"/>
</dbReference>
<dbReference type="GO" id="GO:0052837">
    <property type="term" value="P:thiazole biosynthetic process"/>
    <property type="evidence" value="ECO:0007669"/>
    <property type="project" value="TreeGrafter"/>
</dbReference>
<dbReference type="GO" id="GO:0002937">
    <property type="term" value="P:tRNA 4-thiouridine biosynthesis"/>
    <property type="evidence" value="ECO:0007669"/>
    <property type="project" value="TreeGrafter"/>
</dbReference>
<dbReference type="CDD" id="cd01712">
    <property type="entry name" value="PPase_ThiI"/>
    <property type="match status" value="1"/>
</dbReference>
<dbReference type="CDD" id="cd11716">
    <property type="entry name" value="THUMP_ThiI"/>
    <property type="match status" value="1"/>
</dbReference>
<dbReference type="FunFam" id="3.30.2130.30:FF:000009">
    <property type="entry name" value="Probable tRNA sulfurtransferase"/>
    <property type="match status" value="1"/>
</dbReference>
<dbReference type="FunFam" id="3.40.50.620:FF:000053">
    <property type="entry name" value="Probable tRNA sulfurtransferase"/>
    <property type="match status" value="1"/>
</dbReference>
<dbReference type="Gene3D" id="3.30.2130.30">
    <property type="match status" value="1"/>
</dbReference>
<dbReference type="Gene3D" id="3.40.50.620">
    <property type="entry name" value="HUPs"/>
    <property type="match status" value="1"/>
</dbReference>
<dbReference type="HAMAP" id="MF_00021">
    <property type="entry name" value="ThiI"/>
    <property type="match status" value="1"/>
</dbReference>
<dbReference type="InterPro" id="IPR014729">
    <property type="entry name" value="Rossmann-like_a/b/a_fold"/>
</dbReference>
<dbReference type="InterPro" id="IPR020536">
    <property type="entry name" value="ThiI_AANH"/>
</dbReference>
<dbReference type="InterPro" id="IPR054173">
    <property type="entry name" value="ThiI_fer"/>
</dbReference>
<dbReference type="InterPro" id="IPR049961">
    <property type="entry name" value="ThiI_N"/>
</dbReference>
<dbReference type="InterPro" id="IPR004114">
    <property type="entry name" value="THUMP_dom"/>
</dbReference>
<dbReference type="InterPro" id="IPR049962">
    <property type="entry name" value="THUMP_ThiI"/>
</dbReference>
<dbReference type="InterPro" id="IPR003720">
    <property type="entry name" value="tRNA_STrfase"/>
</dbReference>
<dbReference type="InterPro" id="IPR050102">
    <property type="entry name" value="tRNA_sulfurtransferase_ThiI"/>
</dbReference>
<dbReference type="NCBIfam" id="TIGR00342">
    <property type="entry name" value="tRNA uracil 4-sulfurtransferase ThiI"/>
    <property type="match status" value="1"/>
</dbReference>
<dbReference type="PANTHER" id="PTHR43209">
    <property type="entry name" value="TRNA SULFURTRANSFERASE"/>
    <property type="match status" value="1"/>
</dbReference>
<dbReference type="PANTHER" id="PTHR43209:SF1">
    <property type="entry name" value="TRNA SULFURTRANSFERASE"/>
    <property type="match status" value="1"/>
</dbReference>
<dbReference type="Pfam" id="PF02568">
    <property type="entry name" value="ThiI"/>
    <property type="match status" value="1"/>
</dbReference>
<dbReference type="Pfam" id="PF22025">
    <property type="entry name" value="ThiI_fer"/>
    <property type="match status" value="1"/>
</dbReference>
<dbReference type="Pfam" id="PF02926">
    <property type="entry name" value="THUMP"/>
    <property type="match status" value="1"/>
</dbReference>
<dbReference type="SMART" id="SM00981">
    <property type="entry name" value="THUMP"/>
    <property type="match status" value="1"/>
</dbReference>
<dbReference type="SUPFAM" id="SSF52402">
    <property type="entry name" value="Adenine nucleotide alpha hydrolases-like"/>
    <property type="match status" value="1"/>
</dbReference>
<dbReference type="SUPFAM" id="SSF143437">
    <property type="entry name" value="THUMP domain-like"/>
    <property type="match status" value="1"/>
</dbReference>
<dbReference type="PROSITE" id="PS51165">
    <property type="entry name" value="THUMP"/>
    <property type="match status" value="1"/>
</dbReference>
<gene>
    <name evidence="1" type="primary">thiI</name>
    <name type="ordered locus">SaurJH1_1806</name>
</gene>
<evidence type="ECO:0000255" key="1">
    <source>
        <dbReference type="HAMAP-Rule" id="MF_00021"/>
    </source>
</evidence>
<proteinExistence type="inferred from homology"/>